<name>AZUR_BORBR</name>
<gene>
    <name type="ordered locus">BB3856</name>
</gene>
<organism>
    <name type="scientific">Bordetella bronchiseptica (strain ATCC BAA-588 / NCTC 13252 / RB50)</name>
    <name type="common">Alcaligenes bronchisepticus</name>
    <dbReference type="NCBI Taxonomy" id="257310"/>
    <lineage>
        <taxon>Bacteria</taxon>
        <taxon>Pseudomonadati</taxon>
        <taxon>Pseudomonadota</taxon>
        <taxon>Betaproteobacteria</taxon>
        <taxon>Burkholderiales</taxon>
        <taxon>Alcaligenaceae</taxon>
        <taxon>Bordetella</taxon>
    </lineage>
</organism>
<comment type="subcellular location">
    <subcellularLocation>
        <location>Periplasm</location>
    </subcellularLocation>
</comment>
<comment type="sequence caution" evidence="3">
    <conflict type="erroneous initiation">
        <sequence resource="EMBL-CDS" id="CAE35830"/>
    </conflict>
</comment>
<accession>P0A321</accession>
<accession>P00278</accession>
<feature type="signal peptide" evidence="2">
    <location>
        <begin position="1"/>
        <end position="21"/>
    </location>
</feature>
<feature type="chain" id="PRO_0000002859" description="Azurin">
    <location>
        <begin position="22"/>
        <end position="150"/>
    </location>
</feature>
<feature type="domain" description="Plastocyanin-like">
    <location>
        <begin position="22"/>
        <end position="150"/>
    </location>
</feature>
<feature type="binding site" evidence="1">
    <location>
        <position position="67"/>
    </location>
    <ligand>
        <name>Cu cation</name>
        <dbReference type="ChEBI" id="CHEBI:23378"/>
    </ligand>
</feature>
<feature type="binding site" evidence="1">
    <location>
        <position position="133"/>
    </location>
    <ligand>
        <name>Cu cation</name>
        <dbReference type="ChEBI" id="CHEBI:23378"/>
    </ligand>
</feature>
<feature type="binding site" evidence="1">
    <location>
        <position position="138"/>
    </location>
    <ligand>
        <name>Cu cation</name>
        <dbReference type="ChEBI" id="CHEBI:23378"/>
    </ligand>
</feature>
<feature type="binding site" evidence="1">
    <location>
        <position position="142"/>
    </location>
    <ligand>
        <name>Cu cation</name>
        <dbReference type="ChEBI" id="CHEBI:23378"/>
    </ligand>
</feature>
<feature type="disulfide bond" evidence="1">
    <location>
        <begin position="24"/>
        <end position="47"/>
    </location>
</feature>
<evidence type="ECO:0000250" key="1"/>
<evidence type="ECO:0000269" key="2">
    <source ref="2"/>
</evidence>
<evidence type="ECO:0000305" key="3"/>
<proteinExistence type="evidence at protein level"/>
<protein>
    <recommendedName>
        <fullName>Azurin</fullName>
    </recommendedName>
</protein>
<reference key="1">
    <citation type="journal article" date="2003" name="Nat. Genet.">
        <title>Comparative analysis of the genome sequences of Bordetella pertussis, Bordetella parapertussis and Bordetella bronchiseptica.</title>
        <authorList>
            <person name="Parkhill J."/>
            <person name="Sebaihia M."/>
            <person name="Preston A."/>
            <person name="Murphy L.D."/>
            <person name="Thomson N.R."/>
            <person name="Harris D.E."/>
            <person name="Holden M.T.G."/>
            <person name="Churcher C.M."/>
            <person name="Bentley S.D."/>
            <person name="Mungall K.L."/>
            <person name="Cerdeno-Tarraga A.-M."/>
            <person name="Temple L."/>
            <person name="James K.D."/>
            <person name="Harris B."/>
            <person name="Quail M.A."/>
            <person name="Achtman M."/>
            <person name="Atkin R."/>
            <person name="Baker S."/>
            <person name="Basham D."/>
            <person name="Bason N."/>
            <person name="Cherevach I."/>
            <person name="Chillingworth T."/>
            <person name="Collins M."/>
            <person name="Cronin A."/>
            <person name="Davis P."/>
            <person name="Doggett J."/>
            <person name="Feltwell T."/>
            <person name="Goble A."/>
            <person name="Hamlin N."/>
            <person name="Hauser H."/>
            <person name="Holroyd S."/>
            <person name="Jagels K."/>
            <person name="Leather S."/>
            <person name="Moule S."/>
            <person name="Norberczak H."/>
            <person name="O'Neil S."/>
            <person name="Ormond D."/>
            <person name="Price C."/>
            <person name="Rabbinowitsch E."/>
            <person name="Rutter S."/>
            <person name="Sanders M."/>
            <person name="Saunders D."/>
            <person name="Seeger K."/>
            <person name="Sharp S."/>
            <person name="Simmonds M."/>
            <person name="Skelton J."/>
            <person name="Squares R."/>
            <person name="Squares S."/>
            <person name="Stevens K."/>
            <person name="Unwin L."/>
            <person name="Whitehead S."/>
            <person name="Barrell B.G."/>
            <person name="Maskell D.J."/>
        </authorList>
    </citation>
    <scope>NUCLEOTIDE SEQUENCE [LARGE SCALE GENOMIC DNA]</scope>
    <source>
        <strain>ATCC BAA-588 / NCTC 13252 / RB50</strain>
    </source>
</reference>
<reference key="2">
    <citation type="book" date="1968" name="Chemotaxonomy and serotaxonomy">
        <title>Species differences in the amino-acid sequences of bacterial proteins.</title>
        <editorList>
            <person name="Hawkes J.G."/>
        </editorList>
        <authorList>
            <person name="Ambler R.P."/>
        </authorList>
    </citation>
    <scope>PROTEIN SEQUENCE OF 22-150</scope>
    <source>
        <strain>ATCC 4617 / NCIB 9935 / NCTC 8344 / NRRL B-140</strain>
    </source>
</reference>
<sequence>MFKQVLGGMALMAAFSAPVLAAECSVDIAGTDQMQFDKKAIEVSKSCKQFTVNLKHTGKLPRNVMGHNWVLTKTADMQAVEKDGIAAGLDNQYLKAGDTRVLAHTKVLGGGESDSVTFDVAKLAAGDDYTFFCSFPGHGALMKGTLKLVD</sequence>
<dbReference type="EMBL" id="BX640448">
    <property type="protein sequence ID" value="CAE35830.1"/>
    <property type="status" value="ALT_INIT"/>
    <property type="molecule type" value="Genomic_DNA"/>
</dbReference>
<dbReference type="PIR" id="A00284">
    <property type="entry name" value="AZBR"/>
</dbReference>
<dbReference type="SMR" id="P0A321"/>
<dbReference type="KEGG" id="bbr:BB3856"/>
<dbReference type="eggNOG" id="COG3241">
    <property type="taxonomic scope" value="Bacteria"/>
</dbReference>
<dbReference type="HOGENOM" id="CLU_112845_1_0_4"/>
<dbReference type="Proteomes" id="UP000001027">
    <property type="component" value="Chromosome"/>
</dbReference>
<dbReference type="GO" id="GO:0042597">
    <property type="term" value="C:periplasmic space"/>
    <property type="evidence" value="ECO:0007669"/>
    <property type="project" value="UniProtKB-SubCell"/>
</dbReference>
<dbReference type="GO" id="GO:0005507">
    <property type="term" value="F:copper ion binding"/>
    <property type="evidence" value="ECO:0007669"/>
    <property type="project" value="InterPro"/>
</dbReference>
<dbReference type="GO" id="GO:0009055">
    <property type="term" value="F:electron transfer activity"/>
    <property type="evidence" value="ECO:0007669"/>
    <property type="project" value="InterPro"/>
</dbReference>
<dbReference type="CDD" id="cd13922">
    <property type="entry name" value="Azurin"/>
    <property type="match status" value="1"/>
</dbReference>
<dbReference type="FunFam" id="2.60.40.420:FF:000040">
    <property type="entry name" value="Azurin"/>
    <property type="match status" value="1"/>
</dbReference>
<dbReference type="Gene3D" id="2.60.40.420">
    <property type="entry name" value="Cupredoxins - blue copper proteins"/>
    <property type="match status" value="1"/>
</dbReference>
<dbReference type="InterPro" id="IPR014068">
    <property type="entry name" value="Azurin"/>
</dbReference>
<dbReference type="InterPro" id="IPR000923">
    <property type="entry name" value="BlueCu_1"/>
</dbReference>
<dbReference type="InterPro" id="IPR028871">
    <property type="entry name" value="BlueCu_1_BS"/>
</dbReference>
<dbReference type="InterPro" id="IPR050845">
    <property type="entry name" value="Cu-binding_ET"/>
</dbReference>
<dbReference type="InterPro" id="IPR008972">
    <property type="entry name" value="Cupredoxin"/>
</dbReference>
<dbReference type="NCBIfam" id="TIGR02695">
    <property type="entry name" value="azurin"/>
    <property type="match status" value="1"/>
</dbReference>
<dbReference type="PANTHER" id="PTHR38439">
    <property type="entry name" value="AURACYANIN-B"/>
    <property type="match status" value="1"/>
</dbReference>
<dbReference type="PANTHER" id="PTHR38439:SF2">
    <property type="entry name" value="OUTER MEMBRANE PROTEIN H.8"/>
    <property type="match status" value="1"/>
</dbReference>
<dbReference type="Pfam" id="PF00127">
    <property type="entry name" value="Copper-bind"/>
    <property type="match status" value="1"/>
</dbReference>
<dbReference type="SUPFAM" id="SSF49503">
    <property type="entry name" value="Cupredoxins"/>
    <property type="match status" value="1"/>
</dbReference>
<dbReference type="PROSITE" id="PS00196">
    <property type="entry name" value="COPPER_BLUE"/>
    <property type="match status" value="1"/>
</dbReference>
<keyword id="KW-0186">Copper</keyword>
<keyword id="KW-0903">Direct protein sequencing</keyword>
<keyword id="KW-1015">Disulfide bond</keyword>
<keyword id="KW-0249">Electron transport</keyword>
<keyword id="KW-0479">Metal-binding</keyword>
<keyword id="KW-0574">Periplasm</keyword>
<keyword id="KW-0732">Signal</keyword>
<keyword id="KW-0813">Transport</keyword>